<sequence>MTEQLKDFDVAEHLTSEEEIQLYLNEILQEDNIELILSALGDIARARNMSQIARDAGISREGLYKALSGTGNPTFATVMKVMKALNLQFQVQQSRFA</sequence>
<dbReference type="EMBL" id="L42023">
    <property type="protein sequence ID" value="AAC23070.1"/>
    <property type="molecule type" value="Genomic_DNA"/>
</dbReference>
<dbReference type="PIR" id="C64029">
    <property type="entry name" value="C64029"/>
</dbReference>
<dbReference type="RefSeq" id="NP_439570.1">
    <property type="nucleotide sequence ID" value="NC_000907.1"/>
</dbReference>
<dbReference type="SMR" id="P44191"/>
<dbReference type="EnsemblBacteria" id="AAC23070">
    <property type="protein sequence ID" value="AAC23070"/>
    <property type="gene ID" value="HI_1420"/>
</dbReference>
<dbReference type="KEGG" id="hin:HI_1420"/>
<dbReference type="PATRIC" id="fig|71421.8.peg.1478"/>
<dbReference type="eggNOG" id="COG3636">
    <property type="taxonomic scope" value="Bacteria"/>
</dbReference>
<dbReference type="HOGENOM" id="CLU_137365_1_1_6"/>
<dbReference type="OrthoDB" id="9798416at2"/>
<dbReference type="PhylomeDB" id="P44191"/>
<dbReference type="BioCyc" id="HINF71421:G1GJ1-1443-MONOMER"/>
<dbReference type="Proteomes" id="UP000000579">
    <property type="component" value="Chromosome"/>
</dbReference>
<dbReference type="GO" id="GO:0003677">
    <property type="term" value="F:DNA binding"/>
    <property type="evidence" value="ECO:0007669"/>
    <property type="project" value="InterPro"/>
</dbReference>
<dbReference type="CDD" id="cd00093">
    <property type="entry name" value="HTH_XRE"/>
    <property type="match status" value="1"/>
</dbReference>
<dbReference type="Gene3D" id="1.10.260.40">
    <property type="entry name" value="lambda repressor-like DNA-binding domains"/>
    <property type="match status" value="1"/>
</dbReference>
<dbReference type="InterPro" id="IPR001387">
    <property type="entry name" value="Cro/C1-type_HTH"/>
</dbReference>
<dbReference type="InterPro" id="IPR014057">
    <property type="entry name" value="HI1420"/>
</dbReference>
<dbReference type="InterPro" id="IPR010982">
    <property type="entry name" value="Lambda_DNA-bd_dom_sf"/>
</dbReference>
<dbReference type="NCBIfam" id="TIGR02684">
    <property type="entry name" value="dnstrm_HI1420"/>
    <property type="match status" value="1"/>
</dbReference>
<dbReference type="PANTHER" id="PTHR40275">
    <property type="entry name" value="SSL7038 PROTEIN"/>
    <property type="match status" value="1"/>
</dbReference>
<dbReference type="PANTHER" id="PTHR40275:SF1">
    <property type="entry name" value="SSL7038 PROTEIN"/>
    <property type="match status" value="1"/>
</dbReference>
<dbReference type="Pfam" id="PF21716">
    <property type="entry name" value="dnstrm_HI1420"/>
    <property type="match status" value="1"/>
</dbReference>
<dbReference type="SUPFAM" id="SSF47413">
    <property type="entry name" value="lambda repressor-like DNA-binding domains"/>
    <property type="match status" value="1"/>
</dbReference>
<gene>
    <name type="ordered locus">HI_1420</name>
</gene>
<protein>
    <recommendedName>
        <fullName>Uncharacterized protein HI_1420</fullName>
    </recommendedName>
</protein>
<name>Y1420_HAEIN</name>
<accession>P44191</accession>
<reference key="1">
    <citation type="journal article" date="1995" name="Science">
        <title>Whole-genome random sequencing and assembly of Haemophilus influenzae Rd.</title>
        <authorList>
            <person name="Fleischmann R.D."/>
            <person name="Adams M.D."/>
            <person name="White O."/>
            <person name="Clayton R.A."/>
            <person name="Kirkness E.F."/>
            <person name="Kerlavage A.R."/>
            <person name="Bult C.J."/>
            <person name="Tomb J.-F."/>
            <person name="Dougherty B.A."/>
            <person name="Merrick J.M."/>
            <person name="McKenney K."/>
            <person name="Sutton G.G."/>
            <person name="FitzHugh W."/>
            <person name="Fields C.A."/>
            <person name="Gocayne J.D."/>
            <person name="Scott J.D."/>
            <person name="Shirley R."/>
            <person name="Liu L.-I."/>
            <person name="Glodek A."/>
            <person name="Kelley J.M."/>
            <person name="Weidman J.F."/>
            <person name="Phillips C.A."/>
            <person name="Spriggs T."/>
            <person name="Hedblom E."/>
            <person name="Cotton M.D."/>
            <person name="Utterback T.R."/>
            <person name="Hanna M.C."/>
            <person name="Nguyen D.T."/>
            <person name="Saudek D.M."/>
            <person name="Brandon R.C."/>
            <person name="Fine L.D."/>
            <person name="Fritchman J.L."/>
            <person name="Fuhrmann J.L."/>
            <person name="Geoghagen N.S.M."/>
            <person name="Gnehm C.L."/>
            <person name="McDonald L.A."/>
            <person name="Small K.V."/>
            <person name="Fraser C.M."/>
            <person name="Smith H.O."/>
            <person name="Venter J.C."/>
        </authorList>
    </citation>
    <scope>NUCLEOTIDE SEQUENCE [LARGE SCALE GENOMIC DNA]</scope>
    <source>
        <strain>ATCC 51907 / DSM 11121 / KW20 / Rd</strain>
    </source>
</reference>
<proteinExistence type="predicted"/>
<organism>
    <name type="scientific">Haemophilus influenzae (strain ATCC 51907 / DSM 11121 / KW20 / Rd)</name>
    <dbReference type="NCBI Taxonomy" id="71421"/>
    <lineage>
        <taxon>Bacteria</taxon>
        <taxon>Pseudomonadati</taxon>
        <taxon>Pseudomonadota</taxon>
        <taxon>Gammaproteobacteria</taxon>
        <taxon>Pasteurellales</taxon>
        <taxon>Pasteurellaceae</taxon>
        <taxon>Haemophilus</taxon>
    </lineage>
</organism>
<keyword id="KW-1185">Reference proteome</keyword>
<feature type="chain" id="PRO_0000078055" description="Uncharacterized protein HI_1420">
    <location>
        <begin position="1"/>
        <end position="97"/>
    </location>
</feature>